<accession>B4EXU3</accession>
<name>FADR_PROMH</name>
<keyword id="KW-0010">Activator</keyword>
<keyword id="KW-0963">Cytoplasm</keyword>
<keyword id="KW-0238">DNA-binding</keyword>
<keyword id="KW-0276">Fatty acid metabolism</keyword>
<keyword id="KW-0443">Lipid metabolism</keyword>
<keyword id="KW-1185">Reference proteome</keyword>
<keyword id="KW-0678">Repressor</keyword>
<keyword id="KW-0804">Transcription</keyword>
<keyword id="KW-0805">Transcription regulation</keyword>
<sequence length="239" mass="27224">MVIKAQSPAGFAEEYIVESIWNNRFPPGSILPAERELSELIGVTRTTLREVLQRLARDGWLTIQHGKPTKVNNFWETSGLNILETVARLDHDRVPQLIDNLLAVRTNISAIFIRTAFKNNPEKSLEVLTHQLTTENSADEFSELDYNIFRGLAFASGNPIYGLILNGLKGLYTRVGRYYFSNVQAKELALSFYKKLALLCEQKDTEHVMDCVRQYGKESGIIWHELQSPLPSDLEEVKR</sequence>
<organism>
    <name type="scientific">Proteus mirabilis (strain HI4320)</name>
    <dbReference type="NCBI Taxonomy" id="529507"/>
    <lineage>
        <taxon>Bacteria</taxon>
        <taxon>Pseudomonadati</taxon>
        <taxon>Pseudomonadota</taxon>
        <taxon>Gammaproteobacteria</taxon>
        <taxon>Enterobacterales</taxon>
        <taxon>Morganellaceae</taxon>
        <taxon>Proteus</taxon>
    </lineage>
</organism>
<reference key="1">
    <citation type="journal article" date="2008" name="J. Bacteriol.">
        <title>Complete genome sequence of uropathogenic Proteus mirabilis, a master of both adherence and motility.</title>
        <authorList>
            <person name="Pearson M.M."/>
            <person name="Sebaihia M."/>
            <person name="Churcher C."/>
            <person name="Quail M.A."/>
            <person name="Seshasayee A.S."/>
            <person name="Luscombe N.M."/>
            <person name="Abdellah Z."/>
            <person name="Arrosmith C."/>
            <person name="Atkin B."/>
            <person name="Chillingworth T."/>
            <person name="Hauser H."/>
            <person name="Jagels K."/>
            <person name="Moule S."/>
            <person name="Mungall K."/>
            <person name="Norbertczak H."/>
            <person name="Rabbinowitsch E."/>
            <person name="Walker D."/>
            <person name="Whithead S."/>
            <person name="Thomson N.R."/>
            <person name="Rather P.N."/>
            <person name="Parkhill J."/>
            <person name="Mobley H.L.T."/>
        </authorList>
    </citation>
    <scope>NUCLEOTIDE SEQUENCE [LARGE SCALE GENOMIC DNA]</scope>
    <source>
        <strain>HI4320</strain>
    </source>
</reference>
<feature type="chain" id="PRO_1000132323" description="Fatty acid metabolism regulator protein">
    <location>
        <begin position="1"/>
        <end position="239"/>
    </location>
</feature>
<feature type="domain" description="HTH gntR-type" evidence="1">
    <location>
        <begin position="6"/>
        <end position="74"/>
    </location>
</feature>
<feature type="DNA-binding region" description="H-T-H motif" evidence="1">
    <location>
        <begin position="34"/>
        <end position="53"/>
    </location>
</feature>
<protein>
    <recommendedName>
        <fullName evidence="1">Fatty acid metabolism regulator protein</fullName>
    </recommendedName>
</protein>
<dbReference type="EMBL" id="AM942759">
    <property type="protein sequence ID" value="CAR43173.1"/>
    <property type="molecule type" value="Genomic_DNA"/>
</dbReference>
<dbReference type="RefSeq" id="WP_004243274.1">
    <property type="nucleotide sequence ID" value="NC_010554.1"/>
</dbReference>
<dbReference type="SMR" id="B4EXU3"/>
<dbReference type="EnsemblBacteria" id="CAR43173">
    <property type="protein sequence ID" value="CAR43173"/>
    <property type="gene ID" value="PMI1510"/>
</dbReference>
<dbReference type="GeneID" id="6800212"/>
<dbReference type="KEGG" id="pmr:PMI1510"/>
<dbReference type="eggNOG" id="COG2186">
    <property type="taxonomic scope" value="Bacteria"/>
</dbReference>
<dbReference type="HOGENOM" id="CLU_017584_9_4_6"/>
<dbReference type="Proteomes" id="UP000008319">
    <property type="component" value="Chromosome"/>
</dbReference>
<dbReference type="GO" id="GO:0005737">
    <property type="term" value="C:cytoplasm"/>
    <property type="evidence" value="ECO:0007669"/>
    <property type="project" value="UniProtKB-SubCell"/>
</dbReference>
<dbReference type="GO" id="GO:0003677">
    <property type="term" value="F:DNA binding"/>
    <property type="evidence" value="ECO:0007669"/>
    <property type="project" value="UniProtKB-KW"/>
</dbReference>
<dbReference type="GO" id="GO:0003700">
    <property type="term" value="F:DNA-binding transcription factor activity"/>
    <property type="evidence" value="ECO:0007669"/>
    <property type="project" value="UniProtKB-UniRule"/>
</dbReference>
<dbReference type="GO" id="GO:0000062">
    <property type="term" value="F:fatty-acyl-CoA binding"/>
    <property type="evidence" value="ECO:0007669"/>
    <property type="project" value="InterPro"/>
</dbReference>
<dbReference type="GO" id="GO:0006631">
    <property type="term" value="P:fatty acid metabolic process"/>
    <property type="evidence" value="ECO:0007669"/>
    <property type="project" value="UniProtKB-KW"/>
</dbReference>
<dbReference type="GO" id="GO:0019217">
    <property type="term" value="P:regulation of fatty acid metabolic process"/>
    <property type="evidence" value="ECO:0007669"/>
    <property type="project" value="UniProtKB-UniRule"/>
</dbReference>
<dbReference type="CDD" id="cd07377">
    <property type="entry name" value="WHTH_GntR"/>
    <property type="match status" value="1"/>
</dbReference>
<dbReference type="FunFam" id="1.10.10.10:FF:000036">
    <property type="entry name" value="Fatty acid metabolism regulator protein"/>
    <property type="match status" value="1"/>
</dbReference>
<dbReference type="Gene3D" id="1.20.120.530">
    <property type="entry name" value="GntR ligand-binding domain-like"/>
    <property type="match status" value="1"/>
</dbReference>
<dbReference type="Gene3D" id="1.10.10.10">
    <property type="entry name" value="Winged helix-like DNA-binding domain superfamily/Winged helix DNA-binding domain"/>
    <property type="match status" value="1"/>
</dbReference>
<dbReference type="HAMAP" id="MF_00696">
    <property type="entry name" value="HTH_FadR"/>
    <property type="match status" value="1"/>
</dbReference>
<dbReference type="InterPro" id="IPR014178">
    <property type="entry name" value="FA-response_TF_FadR"/>
</dbReference>
<dbReference type="InterPro" id="IPR028374">
    <property type="entry name" value="FadR_C"/>
</dbReference>
<dbReference type="InterPro" id="IPR008920">
    <property type="entry name" value="TF_FadR/GntR_C"/>
</dbReference>
<dbReference type="InterPro" id="IPR000524">
    <property type="entry name" value="Tscrpt_reg_HTH_GntR"/>
</dbReference>
<dbReference type="InterPro" id="IPR036388">
    <property type="entry name" value="WH-like_DNA-bd_sf"/>
</dbReference>
<dbReference type="InterPro" id="IPR036390">
    <property type="entry name" value="WH_DNA-bd_sf"/>
</dbReference>
<dbReference type="NCBIfam" id="TIGR02812">
    <property type="entry name" value="fadR_gamma"/>
    <property type="match status" value="1"/>
</dbReference>
<dbReference type="NCBIfam" id="NF003444">
    <property type="entry name" value="PRK04984.1"/>
    <property type="match status" value="1"/>
</dbReference>
<dbReference type="PANTHER" id="PTHR43537:SF52">
    <property type="entry name" value="FATTY ACID METABOLISM REGULATOR PROTEIN"/>
    <property type="match status" value="1"/>
</dbReference>
<dbReference type="PANTHER" id="PTHR43537">
    <property type="entry name" value="TRANSCRIPTIONAL REGULATOR, GNTR FAMILY"/>
    <property type="match status" value="1"/>
</dbReference>
<dbReference type="Pfam" id="PF07840">
    <property type="entry name" value="FadR_C"/>
    <property type="match status" value="1"/>
</dbReference>
<dbReference type="Pfam" id="PF00392">
    <property type="entry name" value="GntR"/>
    <property type="match status" value="1"/>
</dbReference>
<dbReference type="PRINTS" id="PR00035">
    <property type="entry name" value="HTHGNTR"/>
</dbReference>
<dbReference type="SMART" id="SM00345">
    <property type="entry name" value="HTH_GNTR"/>
    <property type="match status" value="1"/>
</dbReference>
<dbReference type="SUPFAM" id="SSF48008">
    <property type="entry name" value="GntR ligand-binding domain-like"/>
    <property type="match status" value="1"/>
</dbReference>
<dbReference type="SUPFAM" id="SSF46785">
    <property type="entry name" value="Winged helix' DNA-binding domain"/>
    <property type="match status" value="1"/>
</dbReference>
<dbReference type="PROSITE" id="PS50949">
    <property type="entry name" value="HTH_GNTR"/>
    <property type="match status" value="1"/>
</dbReference>
<proteinExistence type="inferred from homology"/>
<gene>
    <name evidence="1" type="primary">fadR</name>
    <name type="ordered locus">PMI1510</name>
</gene>
<comment type="function">
    <text evidence="1">Multifunctional regulator of fatty acid metabolism.</text>
</comment>
<comment type="subunit">
    <text evidence="1">Homodimer.</text>
</comment>
<comment type="subcellular location">
    <subcellularLocation>
        <location evidence="1">Cytoplasm</location>
    </subcellularLocation>
</comment>
<evidence type="ECO:0000255" key="1">
    <source>
        <dbReference type="HAMAP-Rule" id="MF_00696"/>
    </source>
</evidence>